<name>GLPK_VIBC1</name>
<protein>
    <recommendedName>
        <fullName evidence="1">Glycerol kinase</fullName>
        <ecNumber evidence="1">2.7.1.30</ecNumber>
    </recommendedName>
    <alternativeName>
        <fullName evidence="1">ATP:glycerol 3-phosphotransferase</fullName>
    </alternativeName>
    <alternativeName>
        <fullName evidence="1">Glycerokinase</fullName>
        <shortName evidence="1">GK</shortName>
    </alternativeName>
</protein>
<proteinExistence type="inferred from homology"/>
<comment type="function">
    <text evidence="1">Key enzyme in the regulation of glycerol uptake and metabolism. Catalyzes the phosphorylation of glycerol to yield sn-glycerol 3-phosphate.</text>
</comment>
<comment type="catalytic activity">
    <reaction evidence="1">
        <text>glycerol + ATP = sn-glycerol 3-phosphate + ADP + H(+)</text>
        <dbReference type="Rhea" id="RHEA:21644"/>
        <dbReference type="ChEBI" id="CHEBI:15378"/>
        <dbReference type="ChEBI" id="CHEBI:17754"/>
        <dbReference type="ChEBI" id="CHEBI:30616"/>
        <dbReference type="ChEBI" id="CHEBI:57597"/>
        <dbReference type="ChEBI" id="CHEBI:456216"/>
        <dbReference type="EC" id="2.7.1.30"/>
    </reaction>
</comment>
<comment type="activity regulation">
    <text evidence="1">Inhibited by fructose 1,6-bisphosphate (FBP).</text>
</comment>
<comment type="pathway">
    <text evidence="1">Polyol metabolism; glycerol degradation via glycerol kinase pathway; sn-glycerol 3-phosphate from glycerol: step 1/1.</text>
</comment>
<comment type="similarity">
    <text evidence="1">Belongs to the FGGY kinase family.</text>
</comment>
<evidence type="ECO:0000255" key="1">
    <source>
        <dbReference type="HAMAP-Rule" id="MF_00186"/>
    </source>
</evidence>
<feature type="chain" id="PRO_1000020810" description="Glycerol kinase">
    <location>
        <begin position="1"/>
        <end position="505"/>
    </location>
</feature>
<feature type="binding site" evidence="1">
    <location>
        <position position="14"/>
    </location>
    <ligand>
        <name>ADP</name>
        <dbReference type="ChEBI" id="CHEBI:456216"/>
    </ligand>
</feature>
<feature type="binding site" evidence="1">
    <location>
        <position position="14"/>
    </location>
    <ligand>
        <name>ATP</name>
        <dbReference type="ChEBI" id="CHEBI:30616"/>
    </ligand>
</feature>
<feature type="binding site" evidence="1">
    <location>
        <position position="14"/>
    </location>
    <ligand>
        <name>sn-glycerol 3-phosphate</name>
        <dbReference type="ChEBI" id="CHEBI:57597"/>
    </ligand>
</feature>
<feature type="binding site" evidence="1">
    <location>
        <position position="15"/>
    </location>
    <ligand>
        <name>ATP</name>
        <dbReference type="ChEBI" id="CHEBI:30616"/>
    </ligand>
</feature>
<feature type="binding site" evidence="1">
    <location>
        <position position="16"/>
    </location>
    <ligand>
        <name>ATP</name>
        <dbReference type="ChEBI" id="CHEBI:30616"/>
    </ligand>
</feature>
<feature type="binding site" evidence="1">
    <location>
        <position position="18"/>
    </location>
    <ligand>
        <name>ADP</name>
        <dbReference type="ChEBI" id="CHEBI:456216"/>
    </ligand>
</feature>
<feature type="binding site" evidence="1">
    <location>
        <position position="84"/>
    </location>
    <ligand>
        <name>glycerol</name>
        <dbReference type="ChEBI" id="CHEBI:17754"/>
    </ligand>
</feature>
<feature type="binding site" evidence="1">
    <location>
        <position position="84"/>
    </location>
    <ligand>
        <name>sn-glycerol 3-phosphate</name>
        <dbReference type="ChEBI" id="CHEBI:57597"/>
    </ligand>
</feature>
<feature type="binding site" evidence="1">
    <location>
        <position position="85"/>
    </location>
    <ligand>
        <name>glycerol</name>
        <dbReference type="ChEBI" id="CHEBI:17754"/>
    </ligand>
</feature>
<feature type="binding site" evidence="1">
    <location>
        <position position="85"/>
    </location>
    <ligand>
        <name>sn-glycerol 3-phosphate</name>
        <dbReference type="ChEBI" id="CHEBI:57597"/>
    </ligand>
</feature>
<feature type="binding site" evidence="1">
    <location>
        <position position="136"/>
    </location>
    <ligand>
        <name>glycerol</name>
        <dbReference type="ChEBI" id="CHEBI:17754"/>
    </ligand>
</feature>
<feature type="binding site" evidence="1">
    <location>
        <position position="136"/>
    </location>
    <ligand>
        <name>sn-glycerol 3-phosphate</name>
        <dbReference type="ChEBI" id="CHEBI:57597"/>
    </ligand>
</feature>
<feature type="binding site" evidence="1">
    <location>
        <position position="246"/>
    </location>
    <ligand>
        <name>glycerol</name>
        <dbReference type="ChEBI" id="CHEBI:17754"/>
    </ligand>
</feature>
<feature type="binding site" evidence="1">
    <location>
        <position position="246"/>
    </location>
    <ligand>
        <name>sn-glycerol 3-phosphate</name>
        <dbReference type="ChEBI" id="CHEBI:57597"/>
    </ligand>
</feature>
<feature type="binding site" evidence="1">
    <location>
        <position position="247"/>
    </location>
    <ligand>
        <name>glycerol</name>
        <dbReference type="ChEBI" id="CHEBI:17754"/>
    </ligand>
</feature>
<feature type="binding site" evidence="1">
    <location>
        <position position="268"/>
    </location>
    <ligand>
        <name>ADP</name>
        <dbReference type="ChEBI" id="CHEBI:456216"/>
    </ligand>
</feature>
<feature type="binding site" evidence="1">
    <location>
        <position position="268"/>
    </location>
    <ligand>
        <name>ATP</name>
        <dbReference type="ChEBI" id="CHEBI:30616"/>
    </ligand>
</feature>
<feature type="binding site" evidence="1">
    <location>
        <position position="311"/>
    </location>
    <ligand>
        <name>ADP</name>
        <dbReference type="ChEBI" id="CHEBI:456216"/>
    </ligand>
</feature>
<feature type="binding site" evidence="1">
    <location>
        <position position="311"/>
    </location>
    <ligand>
        <name>ATP</name>
        <dbReference type="ChEBI" id="CHEBI:30616"/>
    </ligand>
</feature>
<feature type="binding site" evidence="1">
    <location>
        <position position="315"/>
    </location>
    <ligand>
        <name>ATP</name>
        <dbReference type="ChEBI" id="CHEBI:30616"/>
    </ligand>
</feature>
<feature type="binding site" evidence="1">
    <location>
        <position position="412"/>
    </location>
    <ligand>
        <name>ADP</name>
        <dbReference type="ChEBI" id="CHEBI:456216"/>
    </ligand>
</feature>
<feature type="binding site" evidence="1">
    <location>
        <position position="412"/>
    </location>
    <ligand>
        <name>ATP</name>
        <dbReference type="ChEBI" id="CHEBI:30616"/>
    </ligand>
</feature>
<feature type="binding site" evidence="1">
    <location>
        <position position="416"/>
    </location>
    <ligand>
        <name>ADP</name>
        <dbReference type="ChEBI" id="CHEBI:456216"/>
    </ligand>
</feature>
<gene>
    <name evidence="1" type="primary">glpK</name>
    <name type="ordered locus">VIBHAR_03313</name>
</gene>
<organism>
    <name type="scientific">Vibrio campbellii (strain ATCC BAA-1116)</name>
    <dbReference type="NCBI Taxonomy" id="2902295"/>
    <lineage>
        <taxon>Bacteria</taxon>
        <taxon>Pseudomonadati</taxon>
        <taxon>Pseudomonadota</taxon>
        <taxon>Gammaproteobacteria</taxon>
        <taxon>Vibrionales</taxon>
        <taxon>Vibrionaceae</taxon>
        <taxon>Vibrio</taxon>
    </lineage>
</organism>
<keyword id="KW-0067">ATP-binding</keyword>
<keyword id="KW-0319">Glycerol metabolism</keyword>
<keyword id="KW-0418">Kinase</keyword>
<keyword id="KW-0547">Nucleotide-binding</keyword>
<keyword id="KW-0808">Transferase</keyword>
<accession>A7N1R1</accession>
<sequence>MTEQKYIVALDQGTTSSRAVILDHDANIVSVAQREFTQIYPEAGWVEHDPMEIWATQSSTLVEALAKTGIRSDQLAGIGITNQRETTIVWNKETGKPVYNAIVWQCRRTADICEELKARGLEDYVRDNTGLVLDPYFSGTKVKWILDNVEGAREDAEAGKLLFGTVDTWLVWKMTQGRVHVTDYTNASRTMLFNINDLCWDQKMLDEMGIPASMMPEVKRSSEIYGQTNIGGKGGTRIPIAGIAGDQQAALYGQMCVEAGQAKNTYGTGCFLLMNTGQEKVTSKNGLLTTLACGPKGEPAYALEGAVFMGGASIQWLRDEMKILAGAEDSEYFATKVDTSNGVYVVPAFTGLGAPYWDAYARGTIVGLTRGVNSNHIIRATLEGIAYQTRDVLDAMQADSGIKLANLRVDGGAVANNFLMQFQSDVLNTEVHRPQVTEVTALGAAYLAGLAVGFWNSIDELQDKAVLDRTFEPHDDEEKRNRRYKGWKRAVKCAQTWSELHDEDD</sequence>
<dbReference type="EC" id="2.7.1.30" evidence="1"/>
<dbReference type="EMBL" id="CP000789">
    <property type="protein sequence ID" value="ABU72261.1"/>
    <property type="molecule type" value="Genomic_DNA"/>
</dbReference>
<dbReference type="RefSeq" id="WP_005450894.1">
    <property type="nucleotide sequence ID" value="NC_022269.1"/>
</dbReference>
<dbReference type="SMR" id="A7N1R1"/>
<dbReference type="GeneID" id="83580809"/>
<dbReference type="KEGG" id="vha:VIBHAR_03313"/>
<dbReference type="PATRIC" id="fig|338187.25.peg.2881"/>
<dbReference type="UniPathway" id="UPA00618">
    <property type="reaction ID" value="UER00672"/>
</dbReference>
<dbReference type="Proteomes" id="UP000008152">
    <property type="component" value="Chromosome I"/>
</dbReference>
<dbReference type="GO" id="GO:0005829">
    <property type="term" value="C:cytosol"/>
    <property type="evidence" value="ECO:0007669"/>
    <property type="project" value="TreeGrafter"/>
</dbReference>
<dbReference type="GO" id="GO:0005524">
    <property type="term" value="F:ATP binding"/>
    <property type="evidence" value="ECO:0007669"/>
    <property type="project" value="UniProtKB-UniRule"/>
</dbReference>
<dbReference type="GO" id="GO:0004370">
    <property type="term" value="F:glycerol kinase activity"/>
    <property type="evidence" value="ECO:0000250"/>
    <property type="project" value="UniProtKB"/>
</dbReference>
<dbReference type="GO" id="GO:0019563">
    <property type="term" value="P:glycerol catabolic process"/>
    <property type="evidence" value="ECO:0007669"/>
    <property type="project" value="UniProtKB-UniRule"/>
</dbReference>
<dbReference type="GO" id="GO:0006071">
    <property type="term" value="P:glycerol metabolic process"/>
    <property type="evidence" value="ECO:0000250"/>
    <property type="project" value="UniProtKB"/>
</dbReference>
<dbReference type="GO" id="GO:0006072">
    <property type="term" value="P:glycerol-3-phosphate metabolic process"/>
    <property type="evidence" value="ECO:0007669"/>
    <property type="project" value="InterPro"/>
</dbReference>
<dbReference type="CDD" id="cd07769">
    <property type="entry name" value="ASKHA_NBD_FGGY_GK"/>
    <property type="match status" value="1"/>
</dbReference>
<dbReference type="FunFam" id="3.30.420.40:FF:000007">
    <property type="entry name" value="Glycerol kinase"/>
    <property type="match status" value="1"/>
</dbReference>
<dbReference type="FunFam" id="3.30.420.40:FF:000008">
    <property type="entry name" value="Glycerol kinase"/>
    <property type="match status" value="1"/>
</dbReference>
<dbReference type="Gene3D" id="3.30.420.40">
    <property type="match status" value="2"/>
</dbReference>
<dbReference type="HAMAP" id="MF_00186">
    <property type="entry name" value="Glycerol_kin"/>
    <property type="match status" value="1"/>
</dbReference>
<dbReference type="InterPro" id="IPR043129">
    <property type="entry name" value="ATPase_NBD"/>
</dbReference>
<dbReference type="InterPro" id="IPR000577">
    <property type="entry name" value="Carb_kinase_FGGY"/>
</dbReference>
<dbReference type="InterPro" id="IPR018483">
    <property type="entry name" value="Carb_kinase_FGGY_CS"/>
</dbReference>
<dbReference type="InterPro" id="IPR018485">
    <property type="entry name" value="FGGY_C"/>
</dbReference>
<dbReference type="InterPro" id="IPR018484">
    <property type="entry name" value="FGGY_N"/>
</dbReference>
<dbReference type="InterPro" id="IPR005999">
    <property type="entry name" value="Glycerol_kin"/>
</dbReference>
<dbReference type="NCBIfam" id="TIGR01311">
    <property type="entry name" value="glycerol_kin"/>
    <property type="match status" value="1"/>
</dbReference>
<dbReference type="NCBIfam" id="NF000756">
    <property type="entry name" value="PRK00047.1"/>
    <property type="match status" value="1"/>
</dbReference>
<dbReference type="PANTHER" id="PTHR10196:SF69">
    <property type="entry name" value="GLYCEROL KINASE"/>
    <property type="match status" value="1"/>
</dbReference>
<dbReference type="PANTHER" id="PTHR10196">
    <property type="entry name" value="SUGAR KINASE"/>
    <property type="match status" value="1"/>
</dbReference>
<dbReference type="Pfam" id="PF02782">
    <property type="entry name" value="FGGY_C"/>
    <property type="match status" value="1"/>
</dbReference>
<dbReference type="Pfam" id="PF00370">
    <property type="entry name" value="FGGY_N"/>
    <property type="match status" value="1"/>
</dbReference>
<dbReference type="PIRSF" id="PIRSF000538">
    <property type="entry name" value="GlpK"/>
    <property type="match status" value="1"/>
</dbReference>
<dbReference type="SUPFAM" id="SSF53067">
    <property type="entry name" value="Actin-like ATPase domain"/>
    <property type="match status" value="2"/>
</dbReference>
<dbReference type="PROSITE" id="PS00933">
    <property type="entry name" value="FGGY_KINASES_1"/>
    <property type="match status" value="1"/>
</dbReference>
<dbReference type="PROSITE" id="PS00445">
    <property type="entry name" value="FGGY_KINASES_2"/>
    <property type="match status" value="1"/>
</dbReference>
<reference key="1">
    <citation type="submission" date="2007-08" db="EMBL/GenBank/DDBJ databases">
        <authorList>
            <consortium name="The Vibrio harveyi Genome Sequencing Project"/>
            <person name="Bassler B."/>
            <person name="Clifton S.W."/>
            <person name="Fulton L."/>
            <person name="Delehaunty K."/>
            <person name="Fronick C."/>
            <person name="Harrison M."/>
            <person name="Markivic C."/>
            <person name="Fulton R."/>
            <person name="Tin-Wollam A.-M."/>
            <person name="Shah N."/>
            <person name="Pepin K."/>
            <person name="Nash W."/>
            <person name="Thiruvilangam P."/>
            <person name="Bhonagiri V."/>
            <person name="Waters C."/>
            <person name="Tu K.C."/>
            <person name="Irgon J."/>
            <person name="Wilson R.K."/>
        </authorList>
    </citation>
    <scope>NUCLEOTIDE SEQUENCE [LARGE SCALE GENOMIC DNA]</scope>
    <source>
        <strain>ATCC BAA-1116 / BB120</strain>
    </source>
</reference>